<proteinExistence type="inferred from homology"/>
<comment type="function">
    <text evidence="1">Involved in the archaeal biosynthesis of heme. Catalyzes the oxiation of precorrin-2 into sirohydroclorin (By similarity).</text>
</comment>
<comment type="catalytic activity">
    <reaction>
        <text>precorrin-2 + NAD(+) = sirohydrochlorin + NADH + 2 H(+)</text>
        <dbReference type="Rhea" id="RHEA:15613"/>
        <dbReference type="ChEBI" id="CHEBI:15378"/>
        <dbReference type="ChEBI" id="CHEBI:57540"/>
        <dbReference type="ChEBI" id="CHEBI:57945"/>
        <dbReference type="ChEBI" id="CHEBI:58351"/>
        <dbReference type="ChEBI" id="CHEBI:58827"/>
        <dbReference type="EC" id="1.3.1.76"/>
    </reaction>
</comment>
<comment type="pathway">
    <text>Porphyrin-containing compound metabolism; siroheme biosynthesis; sirohydrochlorin from precorrin-2: step 1/1.</text>
</comment>
<comment type="subunit">
    <text evidence="1">Homodimer.</text>
</comment>
<comment type="similarity">
    <text evidence="2">Belongs to the precorrin-2 dehydrogenase / sirohydrochlorin ferrochelatase family.</text>
</comment>
<reference key="1">
    <citation type="journal article" date="1996" name="Science">
        <title>Complete genome sequence of the methanogenic archaeon, Methanococcus jannaschii.</title>
        <authorList>
            <person name="Bult C.J."/>
            <person name="White O."/>
            <person name="Olsen G.J."/>
            <person name="Zhou L."/>
            <person name="Fleischmann R.D."/>
            <person name="Sutton G.G."/>
            <person name="Blake J.A."/>
            <person name="FitzGerald L.M."/>
            <person name="Clayton R.A."/>
            <person name="Gocayne J.D."/>
            <person name="Kerlavage A.R."/>
            <person name="Dougherty B.A."/>
            <person name="Tomb J.-F."/>
            <person name="Adams M.D."/>
            <person name="Reich C.I."/>
            <person name="Overbeek R."/>
            <person name="Kirkness E.F."/>
            <person name="Weinstock K.G."/>
            <person name="Merrick J.M."/>
            <person name="Glodek A."/>
            <person name="Scott J.L."/>
            <person name="Geoghagen N.S.M."/>
            <person name="Weidman J.F."/>
            <person name="Fuhrmann J.L."/>
            <person name="Nguyen D."/>
            <person name="Utterback T.R."/>
            <person name="Kelley J.M."/>
            <person name="Peterson J.D."/>
            <person name="Sadow P.W."/>
            <person name="Hanna M.C."/>
            <person name="Cotton M.D."/>
            <person name="Roberts K.M."/>
            <person name="Hurst M.A."/>
            <person name="Kaine B.P."/>
            <person name="Borodovsky M."/>
            <person name="Klenk H.-P."/>
            <person name="Fraser C.M."/>
            <person name="Smith H.O."/>
            <person name="Woese C.R."/>
            <person name="Venter J.C."/>
        </authorList>
    </citation>
    <scope>NUCLEOTIDE SEQUENCE [LARGE SCALE GENOMIC DNA]</scope>
    <source>
        <strain>ATCC 43067 / DSM 2661 / JAL-1 / JCM 10045 / NBRC 100440</strain>
    </source>
</reference>
<protein>
    <recommendedName>
        <fullName>Putative precorrin-2 dehydrogenase</fullName>
        <ecNumber>1.3.1.76</ecNumber>
    </recommendedName>
</protein>
<keyword id="KW-0520">NAD</keyword>
<keyword id="KW-0560">Oxidoreductase</keyword>
<keyword id="KW-0627">Porphyrin biosynthesis</keyword>
<keyword id="KW-1185">Reference proteome</keyword>
<accession>Q57605</accession>
<organism>
    <name type="scientific">Methanocaldococcus jannaschii (strain ATCC 43067 / DSM 2661 / JAL-1 / JCM 10045 / NBRC 100440)</name>
    <name type="common">Methanococcus jannaschii</name>
    <dbReference type="NCBI Taxonomy" id="243232"/>
    <lineage>
        <taxon>Archaea</taxon>
        <taxon>Methanobacteriati</taxon>
        <taxon>Methanobacteriota</taxon>
        <taxon>Methanomada group</taxon>
        <taxon>Methanococci</taxon>
        <taxon>Methanococcales</taxon>
        <taxon>Methanocaldococcaceae</taxon>
        <taxon>Methanocaldococcus</taxon>
    </lineage>
</organism>
<sequence length="206" mass="23989">MLPILLSFEGKKVAVFGCGSVGKRRAKKILKSGGIVDIYSKEFDEEIKKLKESNKNLNLIEIDINQLSDEELKNIIMKYDFIVTAINDEINKRIVKLAKELNKFVNSSTKTEGVNFIIPAYTEVDEVIFSIYTKGKSPLIAKHIRIFVENYLKSTDINMIAYIREFLKETIPKQKDREKILKKIFENEKFREELKKLIEKWENGNH</sequence>
<dbReference type="EC" id="1.3.1.76"/>
<dbReference type="EMBL" id="L77117">
    <property type="protein sequence ID" value="AAB98123.1"/>
    <property type="molecule type" value="Genomic_DNA"/>
</dbReference>
<dbReference type="PIR" id="E64317">
    <property type="entry name" value="E64317"/>
</dbReference>
<dbReference type="RefSeq" id="WP_010869635.1">
    <property type="nucleotide sequence ID" value="NC_000909.1"/>
</dbReference>
<dbReference type="SMR" id="Q57605"/>
<dbReference type="FunCoup" id="Q57605">
    <property type="interactions" value="110"/>
</dbReference>
<dbReference type="STRING" id="243232.MJ_0140"/>
<dbReference type="PaxDb" id="243232-MJ_0140"/>
<dbReference type="EnsemblBacteria" id="AAB98123">
    <property type="protein sequence ID" value="AAB98123"/>
    <property type="gene ID" value="MJ_0140"/>
</dbReference>
<dbReference type="GeneID" id="1450984"/>
<dbReference type="KEGG" id="mja:MJ_0140"/>
<dbReference type="eggNOG" id="arCOG01044">
    <property type="taxonomic scope" value="Archaea"/>
</dbReference>
<dbReference type="HOGENOM" id="CLU_011276_8_2_2"/>
<dbReference type="InParanoid" id="Q57605"/>
<dbReference type="OrthoDB" id="10510at2157"/>
<dbReference type="PhylomeDB" id="Q57605"/>
<dbReference type="UniPathway" id="UPA00262">
    <property type="reaction ID" value="UER00222"/>
</dbReference>
<dbReference type="Proteomes" id="UP000000805">
    <property type="component" value="Chromosome"/>
</dbReference>
<dbReference type="GO" id="GO:0004325">
    <property type="term" value="F:ferrochelatase activity"/>
    <property type="evidence" value="ECO:0007669"/>
    <property type="project" value="InterPro"/>
</dbReference>
<dbReference type="GO" id="GO:0043115">
    <property type="term" value="F:precorrin-2 dehydrogenase activity"/>
    <property type="evidence" value="ECO:0000250"/>
    <property type="project" value="UniProtKB"/>
</dbReference>
<dbReference type="GO" id="GO:0019354">
    <property type="term" value="P:siroheme biosynthetic process"/>
    <property type="evidence" value="ECO:0000250"/>
    <property type="project" value="UniProtKB"/>
</dbReference>
<dbReference type="Gene3D" id="3.40.50.720">
    <property type="entry name" value="NAD(P)-binding Rossmann-like Domain"/>
    <property type="match status" value="1"/>
</dbReference>
<dbReference type="InterPro" id="IPR028161">
    <property type="entry name" value="Met8-like"/>
</dbReference>
<dbReference type="InterPro" id="IPR036291">
    <property type="entry name" value="NAD(P)-bd_dom_sf"/>
</dbReference>
<dbReference type="InterPro" id="IPR006367">
    <property type="entry name" value="Sirohaem_synthase_N"/>
</dbReference>
<dbReference type="NCBIfam" id="TIGR01470">
    <property type="entry name" value="cysG_Nterm"/>
    <property type="match status" value="1"/>
</dbReference>
<dbReference type="PANTHER" id="PTHR35330">
    <property type="entry name" value="SIROHEME BIOSYNTHESIS PROTEIN MET8"/>
    <property type="match status" value="1"/>
</dbReference>
<dbReference type="PANTHER" id="PTHR35330:SF1">
    <property type="entry name" value="SIROHEME BIOSYNTHESIS PROTEIN MET8"/>
    <property type="match status" value="1"/>
</dbReference>
<dbReference type="Pfam" id="PF13241">
    <property type="entry name" value="NAD_binding_7"/>
    <property type="match status" value="1"/>
</dbReference>
<dbReference type="SUPFAM" id="SSF51735">
    <property type="entry name" value="NAD(P)-binding Rossmann-fold domains"/>
    <property type="match status" value="1"/>
</dbReference>
<dbReference type="SUPFAM" id="SSF75615">
    <property type="entry name" value="Siroheme synthase middle domains-like"/>
    <property type="match status" value="1"/>
</dbReference>
<evidence type="ECO:0000250" key="1"/>
<evidence type="ECO:0000305" key="2"/>
<feature type="chain" id="PRO_0000106716" description="Putative precorrin-2 dehydrogenase">
    <location>
        <begin position="1"/>
        <end position="206"/>
    </location>
</feature>
<feature type="binding site" evidence="1">
    <location>
        <begin position="20"/>
        <end position="21"/>
    </location>
    <ligand>
        <name>NAD(+)</name>
        <dbReference type="ChEBI" id="CHEBI:57540"/>
    </ligand>
</feature>
<feature type="binding site" evidence="1">
    <location>
        <begin position="41"/>
        <end position="46"/>
    </location>
    <ligand>
        <name>NAD(+)</name>
        <dbReference type="ChEBI" id="CHEBI:57540"/>
    </ligand>
</feature>
<gene>
    <name type="ordered locus">MJ0140</name>
</gene>
<name>PC2DH_METJA</name>